<protein>
    <recommendedName>
        <fullName>Calpain small subunit 1</fullName>
        <shortName>CSS1</shortName>
    </recommendedName>
    <alternativeName>
        <fullName>Calcium-activated neutral proteinase small subunit</fullName>
        <shortName>CANP small subunit</shortName>
    </alternativeName>
    <alternativeName>
        <fullName>Calcium-dependent protease small subunit</fullName>
        <shortName>CDPS</shortName>
    </alternativeName>
    <alternativeName>
        <fullName>Calcium-dependent protease small subunit 1</fullName>
    </alternativeName>
    <alternativeName>
        <fullName>Calpain regulatory subunit</fullName>
    </alternativeName>
</protein>
<organism>
    <name type="scientific">Mus musculus</name>
    <name type="common">Mouse</name>
    <dbReference type="NCBI Taxonomy" id="10090"/>
    <lineage>
        <taxon>Eukaryota</taxon>
        <taxon>Metazoa</taxon>
        <taxon>Chordata</taxon>
        <taxon>Craniata</taxon>
        <taxon>Vertebrata</taxon>
        <taxon>Euteleostomi</taxon>
        <taxon>Mammalia</taxon>
        <taxon>Eutheria</taxon>
        <taxon>Euarchontoglires</taxon>
        <taxon>Glires</taxon>
        <taxon>Rodentia</taxon>
        <taxon>Myomorpha</taxon>
        <taxon>Muroidea</taxon>
        <taxon>Muridae</taxon>
        <taxon>Murinae</taxon>
        <taxon>Mus</taxon>
        <taxon>Mus</taxon>
    </lineage>
</organism>
<sequence>MFLVNSFLKGGGGGGGGGGLGGGLGNVLGGLISGAAGGGGGGGGGMGLGGGGGGGGTAMRILGGVISAISEAAAQYNPEPPPPRSHYSNIEANESEEVRQFRKLFVQLAGDDMEVSATELMNILNKVVTRHPDLKTDGFGIDTCRSMVAVMDSDTTGKLGFEEFKYLWNNIKKWQAIYKRFDTDRSGTIGSHELPGAFEAAGFHLNEHLYSMIIRRYADESGNMDFDNFISCLVRLDAMFRAFKSLDKNGTGQIQVNIQEWLQLTMYS</sequence>
<name>CPNS1_MOUSE</name>
<keyword id="KW-0007">Acetylation</keyword>
<keyword id="KW-0106">Calcium</keyword>
<keyword id="KW-1003">Cell membrane</keyword>
<keyword id="KW-0963">Cytoplasm</keyword>
<keyword id="KW-0472">Membrane</keyword>
<keyword id="KW-0479">Metal-binding</keyword>
<keyword id="KW-0597">Phosphoprotein</keyword>
<keyword id="KW-1185">Reference proteome</keyword>
<keyword id="KW-0677">Repeat</keyword>
<proteinExistence type="evidence at protein level"/>
<dbReference type="EMBL" id="AF139373">
    <property type="protein sequence ID" value="AAD38363.2"/>
    <property type="molecule type" value="Genomic_DNA"/>
</dbReference>
<dbReference type="EMBL" id="AF058298">
    <property type="protein sequence ID" value="AAC97194.1"/>
    <property type="molecule type" value="mRNA"/>
</dbReference>
<dbReference type="EMBL" id="JH584274">
    <property type="status" value="NOT_ANNOTATED_CDS"/>
    <property type="molecule type" value="Genomic_DNA"/>
</dbReference>
<dbReference type="EMBL" id="BC090988">
    <property type="protein sequence ID" value="AAH90988.1"/>
    <property type="molecule type" value="mRNA"/>
</dbReference>
<dbReference type="EMBL" id="BC018352">
    <property type="protein sequence ID" value="AAH18352.1"/>
    <property type="molecule type" value="mRNA"/>
</dbReference>
<dbReference type="EMBL" id="AK028092">
    <property type="protein sequence ID" value="BAC25743.1"/>
    <property type="molecule type" value="mRNA"/>
</dbReference>
<dbReference type="EMBL" id="AK132819">
    <property type="protein sequence ID" value="BAE21378.1"/>
    <property type="molecule type" value="mRNA"/>
</dbReference>
<dbReference type="CCDS" id="CCDS21082.1"/>
<dbReference type="RefSeq" id="NP_033925.2">
    <property type="nucleotide sequence ID" value="NM_009795.4"/>
</dbReference>
<dbReference type="RefSeq" id="XP_006539551.1">
    <property type="nucleotide sequence ID" value="XM_006539488.3"/>
</dbReference>
<dbReference type="SMR" id="O88456"/>
<dbReference type="BioGRID" id="198473">
    <property type="interactions" value="19"/>
</dbReference>
<dbReference type="ComplexPortal" id="CPX-4301">
    <property type="entry name" value="M-Calpain complex"/>
</dbReference>
<dbReference type="ComplexPortal" id="CPX-4304">
    <property type="entry name" value="mu-Calpain complex"/>
</dbReference>
<dbReference type="FunCoup" id="O88456">
    <property type="interactions" value="1152"/>
</dbReference>
<dbReference type="IntAct" id="O88456">
    <property type="interactions" value="1"/>
</dbReference>
<dbReference type="STRING" id="10090.ENSMUSP00000001845"/>
<dbReference type="GlyGen" id="O88456">
    <property type="glycosylation" value="1 site, 1 O-linked glycan (1 site)"/>
</dbReference>
<dbReference type="iPTMnet" id="O88456"/>
<dbReference type="PhosphoSitePlus" id="O88456"/>
<dbReference type="jPOST" id="O88456"/>
<dbReference type="PaxDb" id="10090-ENSMUSP00000001845"/>
<dbReference type="PeptideAtlas" id="O88456"/>
<dbReference type="ProteomicsDB" id="283817"/>
<dbReference type="ProteomicsDB" id="328663"/>
<dbReference type="Pumba" id="O88456"/>
<dbReference type="Antibodypedia" id="1704">
    <property type="antibodies" value="262 antibodies from 33 providers"/>
</dbReference>
<dbReference type="DNASU" id="12336"/>
<dbReference type="Ensembl" id="ENSMUST00000001845.13">
    <property type="protein sequence ID" value="ENSMUSP00000001845.6"/>
    <property type="gene ID" value="ENSMUSG00000001794.14"/>
</dbReference>
<dbReference type="Ensembl" id="ENSMUST00000126116.3">
    <property type="protein sequence ID" value="ENSMUSP00000117951.3"/>
    <property type="gene ID" value="ENSMUSG00000001794.14"/>
</dbReference>
<dbReference type="GeneID" id="12336"/>
<dbReference type="KEGG" id="mmu:12336"/>
<dbReference type="UCSC" id="uc009gdq.1">
    <property type="organism name" value="mouse"/>
</dbReference>
<dbReference type="UCSC" id="uc009gdr.1">
    <property type="organism name" value="mouse"/>
</dbReference>
<dbReference type="AGR" id="MGI:88266"/>
<dbReference type="CTD" id="826"/>
<dbReference type="MGI" id="MGI:88266">
    <property type="gene designation" value="Capns1"/>
</dbReference>
<dbReference type="VEuPathDB" id="HostDB:ENSMUSG00000001794"/>
<dbReference type="eggNOG" id="KOG0037">
    <property type="taxonomic scope" value="Eukaryota"/>
</dbReference>
<dbReference type="GeneTree" id="ENSGT00940000155478"/>
<dbReference type="InParanoid" id="O88456"/>
<dbReference type="OMA" id="QLYSMIV"/>
<dbReference type="OrthoDB" id="186625at2759"/>
<dbReference type="PhylomeDB" id="O88456"/>
<dbReference type="TreeFam" id="TF314682"/>
<dbReference type="BRENDA" id="3.4.22.B24">
    <property type="organism ID" value="3474"/>
</dbReference>
<dbReference type="Reactome" id="R-MMU-1474228">
    <property type="pathway name" value="Degradation of the extracellular matrix"/>
</dbReference>
<dbReference type="Reactome" id="R-MMU-9856530">
    <property type="pathway name" value="High laminar flow shear stress activates signaling by PIEZO1 and PECAM1:CDH5:KDR in endothelial cells"/>
</dbReference>
<dbReference type="Reactome" id="R-MMU-9860927">
    <property type="pathway name" value="Turbulent (oscillatory, disturbed) flow shear stress activates signaling by PIEZO1 and integrins in endothelial cells"/>
</dbReference>
<dbReference type="BioGRID-ORCS" id="12336">
    <property type="hits" value="1 hit in 79 CRISPR screens"/>
</dbReference>
<dbReference type="ChiTaRS" id="Capns1">
    <property type="organism name" value="mouse"/>
</dbReference>
<dbReference type="PRO" id="PR:O88456"/>
<dbReference type="Proteomes" id="UP000000589">
    <property type="component" value="Chromosome 7"/>
</dbReference>
<dbReference type="RNAct" id="O88456">
    <property type="molecule type" value="protein"/>
</dbReference>
<dbReference type="Bgee" id="ENSMUSG00000001794">
    <property type="expression patterns" value="Expressed in spermatid and 268 other cell types or tissues"/>
</dbReference>
<dbReference type="GO" id="GO:0110158">
    <property type="term" value="C:calpain complex"/>
    <property type="evidence" value="ECO:0000266"/>
    <property type="project" value="ComplexPortal"/>
</dbReference>
<dbReference type="GO" id="GO:0005829">
    <property type="term" value="C:cytosol"/>
    <property type="evidence" value="ECO:0007669"/>
    <property type="project" value="Ensembl"/>
</dbReference>
<dbReference type="GO" id="GO:0005886">
    <property type="term" value="C:plasma membrane"/>
    <property type="evidence" value="ECO:0000304"/>
    <property type="project" value="Reactome"/>
</dbReference>
<dbReference type="GO" id="GO:0005509">
    <property type="term" value="F:calcium ion binding"/>
    <property type="evidence" value="ECO:0007669"/>
    <property type="project" value="InterPro"/>
</dbReference>
<dbReference type="GO" id="GO:0004198">
    <property type="term" value="F:calcium-dependent cysteine-type endopeptidase activity"/>
    <property type="evidence" value="ECO:0000315"/>
    <property type="project" value="MGI"/>
</dbReference>
<dbReference type="GO" id="GO:0006508">
    <property type="term" value="P:proteolysis"/>
    <property type="evidence" value="ECO:0000303"/>
    <property type="project" value="ComplexPortal"/>
</dbReference>
<dbReference type="CDD" id="cd16188">
    <property type="entry name" value="EFh_PEF_CPNS1_2"/>
    <property type="match status" value="1"/>
</dbReference>
<dbReference type="FunFam" id="1.10.238.10:FF:000136">
    <property type="entry name" value="Calpain small subunit 1"/>
    <property type="match status" value="1"/>
</dbReference>
<dbReference type="Gene3D" id="1.10.238.10">
    <property type="entry name" value="EF-hand"/>
    <property type="match status" value="1"/>
</dbReference>
<dbReference type="InterPro" id="IPR011992">
    <property type="entry name" value="EF-hand-dom_pair"/>
</dbReference>
<dbReference type="InterPro" id="IPR018247">
    <property type="entry name" value="EF_Hand_1_Ca_BS"/>
</dbReference>
<dbReference type="InterPro" id="IPR002048">
    <property type="entry name" value="EF_hand_dom"/>
</dbReference>
<dbReference type="PANTHER" id="PTHR46735:SF1">
    <property type="entry name" value="CALPAIN SMALL SUBUNIT 1"/>
    <property type="match status" value="1"/>
</dbReference>
<dbReference type="PANTHER" id="PTHR46735">
    <property type="entry name" value="CALPAIN, SMALL SUBUNIT 1 A-RELATED"/>
    <property type="match status" value="1"/>
</dbReference>
<dbReference type="Pfam" id="PF13833">
    <property type="entry name" value="EF-hand_8"/>
    <property type="match status" value="1"/>
</dbReference>
<dbReference type="SUPFAM" id="SSF47473">
    <property type="entry name" value="EF-hand"/>
    <property type="match status" value="1"/>
</dbReference>
<dbReference type="PROSITE" id="PS00018">
    <property type="entry name" value="EF_HAND_1"/>
    <property type="match status" value="2"/>
</dbReference>
<dbReference type="PROSITE" id="PS50222">
    <property type="entry name" value="EF_HAND_2"/>
    <property type="match status" value="3"/>
</dbReference>
<comment type="function">
    <text evidence="5">Regulatory subunit of the calcium-regulated non-lysosomal thiol-protease which catalyzes limited proteolysis of substrates involved in cytoskeletal remodeling and signal transduction. Essential for embryonic development (PubMed:10825211).</text>
</comment>
<comment type="subunit">
    <text evidence="1">Homodimer or heterodimer of a large (catalytic) and a small (regulatory) subunit. In presence of calcium, the heterodimer dissociates (By similarity).</text>
</comment>
<comment type="subcellular location">
    <subcellularLocation>
        <location evidence="1">Cytoplasm</location>
    </subcellularLocation>
    <subcellularLocation>
        <location evidence="1">Cell membrane</location>
    </subcellularLocation>
    <text evidence="1">Translocates to the plasma membrane upon calcium binding.</text>
</comment>
<comment type="domain">
    <text evidence="1">The contact of the 5th EF-hand domain from each monomer allows the formation of the homodimer and also appears to mediate the contact between the large catalytic subunit and small regulatory subunit for the formation of the heterodimer.</text>
</comment>
<comment type="domain">
    <text>EF-hand domains are paired. EF-hand 1 is paired with EF-hand 2 and EF-hand 3 is paired with EF-hand 4. The fifth EF-hand domain, left unpaired, does not bind the calcium but is responsible of the dimerization by EF-embrace. The first four EF-hand domains bind calcium, however it is not sure if the binding of EF-hand 4 to calcium is physiologically relevant.</text>
</comment>
<comment type="disruption phenotype">
    <text evidence="5">Embryonic lethality by 11.5 dpc, with indications of defects in both vasculogenesis and erythropoiesis.</text>
</comment>
<evidence type="ECO:0000250" key="1"/>
<evidence type="ECO:0000250" key="2">
    <source>
        <dbReference type="UniProtKB" id="P04632"/>
    </source>
</evidence>
<evidence type="ECO:0000250" key="3">
    <source>
        <dbReference type="UniProtKB" id="Q64537"/>
    </source>
</evidence>
<evidence type="ECO:0000255" key="4">
    <source>
        <dbReference type="PROSITE-ProRule" id="PRU00448"/>
    </source>
</evidence>
<evidence type="ECO:0000269" key="5">
    <source>
    </source>
</evidence>
<evidence type="ECO:0000305" key="6"/>
<reference key="1">
    <citation type="journal article" date="1998" name="Biochim. Biophys. Acta">
        <title>Structure of the mouse calpain small subunit gene.</title>
        <authorList>
            <person name="Arthur J.S.C."/>
            <person name="Greer P.A."/>
            <person name="Elce J.S."/>
        </authorList>
    </citation>
    <scope>NUCLEOTIDE SEQUENCE [GENOMIC DNA / MRNA]</scope>
    <source>
        <strain>129/Sv</strain>
    </source>
</reference>
<reference key="2">
    <citation type="journal article" date="2009" name="PLoS Biol.">
        <title>Lineage-specific biology revealed by a finished genome assembly of the mouse.</title>
        <authorList>
            <person name="Church D.M."/>
            <person name="Goodstadt L."/>
            <person name="Hillier L.W."/>
            <person name="Zody M.C."/>
            <person name="Goldstein S."/>
            <person name="She X."/>
            <person name="Bult C.J."/>
            <person name="Agarwala R."/>
            <person name="Cherry J.L."/>
            <person name="DiCuccio M."/>
            <person name="Hlavina W."/>
            <person name="Kapustin Y."/>
            <person name="Meric P."/>
            <person name="Maglott D."/>
            <person name="Birtle Z."/>
            <person name="Marques A.C."/>
            <person name="Graves T."/>
            <person name="Zhou S."/>
            <person name="Teague B."/>
            <person name="Potamousis K."/>
            <person name="Churas C."/>
            <person name="Place M."/>
            <person name="Herschleb J."/>
            <person name="Runnheim R."/>
            <person name="Forrest D."/>
            <person name="Amos-Landgraf J."/>
            <person name="Schwartz D.C."/>
            <person name="Cheng Z."/>
            <person name="Lindblad-Toh K."/>
            <person name="Eichler E.E."/>
            <person name="Ponting C.P."/>
        </authorList>
    </citation>
    <scope>NUCLEOTIDE SEQUENCE [LARGE SCALE GENOMIC DNA]</scope>
    <source>
        <strain>C57BL/6J</strain>
    </source>
</reference>
<reference key="3">
    <citation type="journal article" date="2004" name="Genome Res.">
        <title>The status, quality, and expansion of the NIH full-length cDNA project: the Mammalian Gene Collection (MGC).</title>
        <authorList>
            <consortium name="The MGC Project Team"/>
        </authorList>
    </citation>
    <scope>NUCLEOTIDE SEQUENCE [LARGE SCALE MRNA]</scope>
    <source>
        <tissue>Pituitary</tissue>
    </source>
</reference>
<reference key="4">
    <citation type="journal article" date="2005" name="Science">
        <title>The transcriptional landscape of the mammalian genome.</title>
        <authorList>
            <person name="Carninci P."/>
            <person name="Kasukawa T."/>
            <person name="Katayama S."/>
            <person name="Gough J."/>
            <person name="Frith M.C."/>
            <person name="Maeda N."/>
            <person name="Oyama R."/>
            <person name="Ravasi T."/>
            <person name="Lenhard B."/>
            <person name="Wells C."/>
            <person name="Kodzius R."/>
            <person name="Shimokawa K."/>
            <person name="Bajic V.B."/>
            <person name="Brenner S.E."/>
            <person name="Batalov S."/>
            <person name="Forrest A.R."/>
            <person name="Zavolan M."/>
            <person name="Davis M.J."/>
            <person name="Wilming L.G."/>
            <person name="Aidinis V."/>
            <person name="Allen J.E."/>
            <person name="Ambesi-Impiombato A."/>
            <person name="Apweiler R."/>
            <person name="Aturaliya R.N."/>
            <person name="Bailey T.L."/>
            <person name="Bansal M."/>
            <person name="Baxter L."/>
            <person name="Beisel K.W."/>
            <person name="Bersano T."/>
            <person name="Bono H."/>
            <person name="Chalk A.M."/>
            <person name="Chiu K.P."/>
            <person name="Choudhary V."/>
            <person name="Christoffels A."/>
            <person name="Clutterbuck D.R."/>
            <person name="Crowe M.L."/>
            <person name="Dalla E."/>
            <person name="Dalrymple B.P."/>
            <person name="de Bono B."/>
            <person name="Della Gatta G."/>
            <person name="di Bernardo D."/>
            <person name="Down T."/>
            <person name="Engstrom P."/>
            <person name="Fagiolini M."/>
            <person name="Faulkner G."/>
            <person name="Fletcher C.F."/>
            <person name="Fukushima T."/>
            <person name="Furuno M."/>
            <person name="Futaki S."/>
            <person name="Gariboldi M."/>
            <person name="Georgii-Hemming P."/>
            <person name="Gingeras T.R."/>
            <person name="Gojobori T."/>
            <person name="Green R.E."/>
            <person name="Gustincich S."/>
            <person name="Harbers M."/>
            <person name="Hayashi Y."/>
            <person name="Hensch T.K."/>
            <person name="Hirokawa N."/>
            <person name="Hill D."/>
            <person name="Huminiecki L."/>
            <person name="Iacono M."/>
            <person name="Ikeo K."/>
            <person name="Iwama A."/>
            <person name="Ishikawa T."/>
            <person name="Jakt M."/>
            <person name="Kanapin A."/>
            <person name="Katoh M."/>
            <person name="Kawasawa Y."/>
            <person name="Kelso J."/>
            <person name="Kitamura H."/>
            <person name="Kitano H."/>
            <person name="Kollias G."/>
            <person name="Krishnan S.P."/>
            <person name="Kruger A."/>
            <person name="Kummerfeld S.K."/>
            <person name="Kurochkin I.V."/>
            <person name="Lareau L.F."/>
            <person name="Lazarevic D."/>
            <person name="Lipovich L."/>
            <person name="Liu J."/>
            <person name="Liuni S."/>
            <person name="McWilliam S."/>
            <person name="Madan Babu M."/>
            <person name="Madera M."/>
            <person name="Marchionni L."/>
            <person name="Matsuda H."/>
            <person name="Matsuzawa S."/>
            <person name="Miki H."/>
            <person name="Mignone F."/>
            <person name="Miyake S."/>
            <person name="Morris K."/>
            <person name="Mottagui-Tabar S."/>
            <person name="Mulder N."/>
            <person name="Nakano N."/>
            <person name="Nakauchi H."/>
            <person name="Ng P."/>
            <person name="Nilsson R."/>
            <person name="Nishiguchi S."/>
            <person name="Nishikawa S."/>
            <person name="Nori F."/>
            <person name="Ohara O."/>
            <person name="Okazaki Y."/>
            <person name="Orlando V."/>
            <person name="Pang K.C."/>
            <person name="Pavan W.J."/>
            <person name="Pavesi G."/>
            <person name="Pesole G."/>
            <person name="Petrovsky N."/>
            <person name="Piazza S."/>
            <person name="Reed J."/>
            <person name="Reid J.F."/>
            <person name="Ring B.Z."/>
            <person name="Ringwald M."/>
            <person name="Rost B."/>
            <person name="Ruan Y."/>
            <person name="Salzberg S.L."/>
            <person name="Sandelin A."/>
            <person name="Schneider C."/>
            <person name="Schoenbach C."/>
            <person name="Sekiguchi K."/>
            <person name="Semple C.A."/>
            <person name="Seno S."/>
            <person name="Sessa L."/>
            <person name="Sheng Y."/>
            <person name="Shibata Y."/>
            <person name="Shimada H."/>
            <person name="Shimada K."/>
            <person name="Silva D."/>
            <person name="Sinclair B."/>
            <person name="Sperling S."/>
            <person name="Stupka E."/>
            <person name="Sugiura K."/>
            <person name="Sultana R."/>
            <person name="Takenaka Y."/>
            <person name="Taki K."/>
            <person name="Tammoja K."/>
            <person name="Tan S.L."/>
            <person name="Tang S."/>
            <person name="Taylor M.S."/>
            <person name="Tegner J."/>
            <person name="Teichmann S.A."/>
            <person name="Ueda H.R."/>
            <person name="van Nimwegen E."/>
            <person name="Verardo R."/>
            <person name="Wei C.L."/>
            <person name="Yagi K."/>
            <person name="Yamanishi H."/>
            <person name="Zabarovsky E."/>
            <person name="Zhu S."/>
            <person name="Zimmer A."/>
            <person name="Hide W."/>
            <person name="Bult C."/>
            <person name="Grimmond S.M."/>
            <person name="Teasdale R.D."/>
            <person name="Liu E.T."/>
            <person name="Brusic V."/>
            <person name="Quackenbush J."/>
            <person name="Wahlestedt C."/>
            <person name="Mattick J.S."/>
            <person name="Hume D.A."/>
            <person name="Kai C."/>
            <person name="Sasaki D."/>
            <person name="Tomaru Y."/>
            <person name="Fukuda S."/>
            <person name="Kanamori-Katayama M."/>
            <person name="Suzuki M."/>
            <person name="Aoki J."/>
            <person name="Arakawa T."/>
            <person name="Iida J."/>
            <person name="Imamura K."/>
            <person name="Itoh M."/>
            <person name="Kato T."/>
            <person name="Kawaji H."/>
            <person name="Kawagashira N."/>
            <person name="Kawashima T."/>
            <person name="Kojima M."/>
            <person name="Kondo S."/>
            <person name="Konno H."/>
            <person name="Nakano K."/>
            <person name="Ninomiya N."/>
            <person name="Nishio T."/>
            <person name="Okada M."/>
            <person name="Plessy C."/>
            <person name="Shibata K."/>
            <person name="Shiraki T."/>
            <person name="Suzuki S."/>
            <person name="Tagami M."/>
            <person name="Waki K."/>
            <person name="Watahiki A."/>
            <person name="Okamura-Oho Y."/>
            <person name="Suzuki H."/>
            <person name="Kawai J."/>
            <person name="Hayashizaki Y."/>
        </authorList>
    </citation>
    <scope>NUCLEOTIDE SEQUENCE [LARGE SCALE MRNA] OF 67-268</scope>
    <source>
        <strain>C57BL/6J</strain>
        <tissue>Corpus striatum</tissue>
        <tissue>Kidney</tissue>
        <tissue>Testis</tissue>
    </source>
</reference>
<reference key="5">
    <citation type="journal article" date="2000" name="Mol. Cell. Biol.">
        <title>Disruption of the murine calpain small subunit gene, Capn4: calpain is essential for embryonic development but not for cell growth and division.</title>
        <authorList>
            <person name="Arthur J.S.C."/>
            <person name="Elce J.S."/>
            <person name="Hegadorn C."/>
            <person name="Williams K."/>
            <person name="Greer P.A."/>
        </authorList>
    </citation>
    <scope>FUNCTION</scope>
    <scope>DISRUPTION PHENOTYPE</scope>
</reference>
<reference key="6">
    <citation type="journal article" date="2010" name="Cell">
        <title>A tissue-specific atlas of mouse protein phosphorylation and expression.</title>
        <authorList>
            <person name="Huttlin E.L."/>
            <person name="Jedrychowski M.P."/>
            <person name="Elias J.E."/>
            <person name="Goswami T."/>
            <person name="Rad R."/>
            <person name="Beausoleil S.A."/>
            <person name="Villen J."/>
            <person name="Haas W."/>
            <person name="Sowa M.E."/>
            <person name="Gygi S.P."/>
        </authorList>
    </citation>
    <scope>IDENTIFICATION BY MASS SPECTROMETRY [LARGE SCALE ANALYSIS]</scope>
    <source>
        <tissue>Brain</tissue>
        <tissue>Brown adipose tissue</tissue>
        <tissue>Heart</tissue>
        <tissue>Kidney</tissue>
        <tissue>Liver</tissue>
        <tissue>Lung</tissue>
        <tissue>Pancreas</tissue>
        <tissue>Spleen</tissue>
        <tissue>Testis</tissue>
    </source>
</reference>
<gene>
    <name type="primary">Capns1</name>
    <name type="synonym">Capn4</name>
</gene>
<accession>O88456</accession>
<accession>A0A0R4IZW8</accession>
<accession>D3YW48</accession>
<accession>Q3V0X5</accession>
<accession>Q5BKQ2</accession>
<accession>Q8CEI2</accession>
<accession>Q8VEK4</accession>
<accession>Q9R1C5</accession>
<feature type="chain" id="PRO_0000073714" description="Calpain small subunit 1">
    <location>
        <begin position="1"/>
        <end position="268"/>
    </location>
</feature>
<feature type="domain" description="EF-hand 1; atypical" evidence="6">
    <location>
        <begin position="96"/>
        <end position="130"/>
    </location>
</feature>
<feature type="domain" description="EF-hand 2" evidence="4">
    <location>
        <begin position="139"/>
        <end position="172"/>
    </location>
</feature>
<feature type="domain" description="EF-hand 3" evidence="4">
    <location>
        <begin position="169"/>
        <end position="204"/>
    </location>
</feature>
<feature type="domain" description="EF-hand 4" evidence="6">
    <location>
        <begin position="205"/>
        <end position="233"/>
    </location>
</feature>
<feature type="domain" description="EF-hand 5" evidence="4">
    <location>
        <begin position="234"/>
        <end position="268"/>
    </location>
</feature>
<feature type="binding site" evidence="3">
    <location>
        <position position="109"/>
    </location>
    <ligand>
        <name>Ca(2+)</name>
        <dbReference type="ChEBI" id="CHEBI:29108"/>
        <label>1</label>
    </ligand>
</feature>
<feature type="binding site" evidence="3">
    <location>
        <position position="112"/>
    </location>
    <ligand>
        <name>Ca(2+)</name>
        <dbReference type="ChEBI" id="CHEBI:29108"/>
        <label>1</label>
    </ligand>
</feature>
<feature type="binding site" evidence="3">
    <location>
        <position position="114"/>
    </location>
    <ligand>
        <name>Ca(2+)</name>
        <dbReference type="ChEBI" id="CHEBI:29108"/>
        <label>1</label>
    </ligand>
</feature>
<feature type="binding site" evidence="3">
    <location>
        <position position="119"/>
    </location>
    <ligand>
        <name>Ca(2+)</name>
        <dbReference type="ChEBI" id="CHEBI:29108"/>
        <label>1</label>
    </ligand>
</feature>
<feature type="binding site" evidence="3">
    <location>
        <position position="137"/>
    </location>
    <ligand>
        <name>Ca(2+)</name>
        <dbReference type="ChEBI" id="CHEBI:29108"/>
        <label>4</label>
    </ligand>
</feature>
<feature type="binding site" evidence="4">
    <location>
        <position position="152"/>
    </location>
    <ligand>
        <name>Ca(2+)</name>
        <dbReference type="ChEBI" id="CHEBI:29108"/>
        <label>2</label>
    </ligand>
</feature>
<feature type="binding site" evidence="4">
    <location>
        <position position="154"/>
    </location>
    <ligand>
        <name>Ca(2+)</name>
        <dbReference type="ChEBI" id="CHEBI:29108"/>
        <label>2</label>
    </ligand>
</feature>
<feature type="binding site" evidence="3 4">
    <location>
        <position position="156"/>
    </location>
    <ligand>
        <name>Ca(2+)</name>
        <dbReference type="ChEBI" id="CHEBI:29108"/>
        <label>2</label>
    </ligand>
</feature>
<feature type="binding site" evidence="3 4">
    <location>
        <position position="158"/>
    </location>
    <ligand>
        <name>Ca(2+)</name>
        <dbReference type="ChEBI" id="CHEBI:29108"/>
        <label>2</label>
    </ligand>
</feature>
<feature type="binding site" evidence="4">
    <location>
        <position position="163"/>
    </location>
    <ligand>
        <name>Ca(2+)</name>
        <dbReference type="ChEBI" id="CHEBI:29108"/>
        <label>2</label>
    </ligand>
</feature>
<feature type="binding site" evidence="4">
    <location>
        <position position="182"/>
    </location>
    <ligand>
        <name>Ca(2+)</name>
        <dbReference type="ChEBI" id="CHEBI:29108"/>
        <label>3</label>
    </ligand>
</feature>
<feature type="binding site" evidence="4">
    <location>
        <position position="184"/>
    </location>
    <ligand>
        <name>Ca(2+)</name>
        <dbReference type="ChEBI" id="CHEBI:29108"/>
        <label>3</label>
    </ligand>
</feature>
<feature type="binding site" evidence="3 4">
    <location>
        <position position="186"/>
    </location>
    <ligand>
        <name>Ca(2+)</name>
        <dbReference type="ChEBI" id="CHEBI:29108"/>
        <label>3</label>
    </ligand>
</feature>
<feature type="binding site" evidence="3 4">
    <location>
        <position position="188"/>
    </location>
    <ligand>
        <name>Ca(2+)</name>
        <dbReference type="ChEBI" id="CHEBI:29108"/>
        <label>3</label>
    </ligand>
</feature>
<feature type="binding site" evidence="4">
    <location>
        <position position="193"/>
    </location>
    <ligand>
        <name>Ca(2+)</name>
        <dbReference type="ChEBI" id="CHEBI:29108"/>
        <label>3</label>
    </ligand>
</feature>
<feature type="binding site" evidence="3">
    <location>
        <position position="225"/>
    </location>
    <ligand>
        <name>Ca(2+)</name>
        <dbReference type="ChEBI" id="CHEBI:29108"/>
        <label>4</label>
    </ligand>
</feature>
<feature type="modified residue" description="N-acetylmethionine" evidence="2">
    <location>
        <position position="1"/>
    </location>
</feature>
<feature type="modified residue" description="Phosphoserine" evidence="2">
    <location>
        <position position="6"/>
    </location>
</feature>
<feature type="modified residue" description="N6-acetyllysine" evidence="2">
    <location>
        <position position="179"/>
    </location>
</feature>
<feature type="sequence conflict" description="In Ref. 1; AAC97194." evidence="6" ref="1">
    <original>G</original>
    <variation>GG</variation>
    <location>
        <position position="45"/>
    </location>
</feature>
<feature type="sequence conflict" description="In Ref. 4; BAC25743." evidence="6" ref="4">
    <original>AI</original>
    <variation>PL</variation>
    <location>
        <begin position="68"/>
        <end position="69"/>
    </location>
</feature>
<feature type="sequence conflict" description="In Ref. 4; BAE21378." evidence="6" ref="4">
    <original>I</original>
    <variation>M</variation>
    <location>
        <position position="69"/>
    </location>
</feature>